<gene>
    <name evidence="1" type="primary">tmaR</name>
    <name type="ordered locus">VPA1226</name>
</gene>
<evidence type="ECO:0000255" key="1">
    <source>
        <dbReference type="HAMAP-Rule" id="MF_00683"/>
    </source>
</evidence>
<sequence length="104" mass="12408">MSSVFEIVNQARRKNKLKRELLDNEKKVRDNRKRVDLLENLLDYIKPEMSHDEIVAIIKNMKADYEDRVDDHIIKSAEISKARRDISRRIRELTEEDKQTSGKK</sequence>
<dbReference type="EMBL" id="BA000032">
    <property type="protein sequence ID" value="BAC62569.1"/>
    <property type="molecule type" value="Genomic_DNA"/>
</dbReference>
<dbReference type="RefSeq" id="NP_800736.1">
    <property type="nucleotide sequence ID" value="NC_004605.1"/>
</dbReference>
<dbReference type="RefSeq" id="WP_005453573.1">
    <property type="nucleotide sequence ID" value="NC_004605.1"/>
</dbReference>
<dbReference type="SMR" id="Q87GT9"/>
<dbReference type="KEGG" id="vpa:VPA1226"/>
<dbReference type="PATRIC" id="fig|223926.6.peg.4154"/>
<dbReference type="eggNOG" id="COG2926">
    <property type="taxonomic scope" value="Bacteria"/>
</dbReference>
<dbReference type="HOGENOM" id="CLU_153146_0_0_6"/>
<dbReference type="Proteomes" id="UP000002493">
    <property type="component" value="Chromosome 2"/>
</dbReference>
<dbReference type="GO" id="GO:0005829">
    <property type="term" value="C:cytosol"/>
    <property type="evidence" value="ECO:0007669"/>
    <property type="project" value="TreeGrafter"/>
</dbReference>
<dbReference type="HAMAP" id="MF_00683">
    <property type="entry name" value="Pole_loc_TmaR"/>
    <property type="match status" value="1"/>
</dbReference>
<dbReference type="InterPro" id="IPR007458">
    <property type="entry name" value="DUF496"/>
</dbReference>
<dbReference type="NCBIfam" id="NF003844">
    <property type="entry name" value="PRK05423.1"/>
    <property type="match status" value="1"/>
</dbReference>
<dbReference type="PANTHER" id="PTHR39591">
    <property type="entry name" value="UPF0265 PROTEIN YEEX"/>
    <property type="match status" value="1"/>
</dbReference>
<dbReference type="PANTHER" id="PTHR39591:SF1">
    <property type="entry name" value="UPF0265 PROTEIN YEEX"/>
    <property type="match status" value="1"/>
</dbReference>
<dbReference type="Pfam" id="PF04363">
    <property type="entry name" value="DUF496"/>
    <property type="match status" value="1"/>
</dbReference>
<dbReference type="PIRSF" id="PIRSF028773">
    <property type="entry name" value="UCP028773"/>
    <property type="match status" value="1"/>
</dbReference>
<reference key="1">
    <citation type="journal article" date="2003" name="Lancet">
        <title>Genome sequence of Vibrio parahaemolyticus: a pathogenic mechanism distinct from that of V. cholerae.</title>
        <authorList>
            <person name="Makino K."/>
            <person name="Oshima K."/>
            <person name="Kurokawa K."/>
            <person name="Yokoyama K."/>
            <person name="Uda T."/>
            <person name="Tagomori K."/>
            <person name="Iijima Y."/>
            <person name="Najima M."/>
            <person name="Nakano M."/>
            <person name="Yamashita A."/>
            <person name="Kubota Y."/>
            <person name="Kimura S."/>
            <person name="Yasunaga T."/>
            <person name="Honda T."/>
            <person name="Shinagawa H."/>
            <person name="Hattori M."/>
            <person name="Iida T."/>
        </authorList>
    </citation>
    <scope>NUCLEOTIDE SEQUENCE [LARGE SCALE GENOMIC DNA]</scope>
    <source>
        <strain>RIMD 2210633</strain>
    </source>
</reference>
<comment type="function">
    <text evidence="1">Pole-localizer protein involved in the regulation of several cellular processes.</text>
</comment>
<comment type="subcellular location">
    <subcellularLocation>
        <location evidence="1">Cytoplasm</location>
    </subcellularLocation>
</comment>
<comment type="similarity">
    <text evidence="1">Belongs to the pole-localizer TmaR family.</text>
</comment>
<proteinExistence type="inferred from homology"/>
<keyword id="KW-0175">Coiled coil</keyword>
<keyword id="KW-0963">Cytoplasm</keyword>
<organism>
    <name type="scientific">Vibrio parahaemolyticus serotype O3:K6 (strain RIMD 2210633)</name>
    <dbReference type="NCBI Taxonomy" id="223926"/>
    <lineage>
        <taxon>Bacteria</taxon>
        <taxon>Pseudomonadati</taxon>
        <taxon>Pseudomonadota</taxon>
        <taxon>Gammaproteobacteria</taxon>
        <taxon>Vibrionales</taxon>
        <taxon>Vibrionaceae</taxon>
        <taxon>Vibrio</taxon>
    </lineage>
</organism>
<accession>Q87GT9</accession>
<feature type="chain" id="PRO_0000072771" description="Pole-localizer protein TmaR">
    <location>
        <begin position="1"/>
        <end position="104"/>
    </location>
</feature>
<feature type="coiled-coil region" evidence="1">
    <location>
        <begin position="7"/>
        <end position="34"/>
    </location>
</feature>
<feature type="coiled-coil region" evidence="1">
    <location>
        <begin position="76"/>
        <end position="96"/>
    </location>
</feature>
<name>TMAR_VIBPA</name>
<protein>
    <recommendedName>
        <fullName evidence="1">Pole-localizer protein TmaR</fullName>
    </recommendedName>
</protein>